<dbReference type="EC" id="3.6.1.27" evidence="1"/>
<dbReference type="EMBL" id="CP000056">
    <property type="protein sequence ID" value="AAX71347.1"/>
    <property type="molecule type" value="Genomic_DNA"/>
</dbReference>
<dbReference type="RefSeq" id="WP_002986031.1">
    <property type="nucleotide sequence ID" value="NC_007296.2"/>
</dbReference>
<dbReference type="SMR" id="Q48VA9"/>
<dbReference type="KEGG" id="spb:M28_Spy0233"/>
<dbReference type="HOGENOM" id="CLU_060296_2_0_9"/>
<dbReference type="GO" id="GO:0005886">
    <property type="term" value="C:plasma membrane"/>
    <property type="evidence" value="ECO:0007669"/>
    <property type="project" value="UniProtKB-SubCell"/>
</dbReference>
<dbReference type="GO" id="GO:0050380">
    <property type="term" value="F:undecaprenyl-diphosphatase activity"/>
    <property type="evidence" value="ECO:0007669"/>
    <property type="project" value="UniProtKB-UniRule"/>
</dbReference>
<dbReference type="GO" id="GO:0071555">
    <property type="term" value="P:cell wall organization"/>
    <property type="evidence" value="ECO:0007669"/>
    <property type="project" value="UniProtKB-KW"/>
</dbReference>
<dbReference type="GO" id="GO:0009252">
    <property type="term" value="P:peptidoglycan biosynthetic process"/>
    <property type="evidence" value="ECO:0007669"/>
    <property type="project" value="UniProtKB-KW"/>
</dbReference>
<dbReference type="GO" id="GO:0008360">
    <property type="term" value="P:regulation of cell shape"/>
    <property type="evidence" value="ECO:0007669"/>
    <property type="project" value="UniProtKB-KW"/>
</dbReference>
<dbReference type="GO" id="GO:0046677">
    <property type="term" value="P:response to antibiotic"/>
    <property type="evidence" value="ECO:0007669"/>
    <property type="project" value="UniProtKB-UniRule"/>
</dbReference>
<dbReference type="HAMAP" id="MF_01006">
    <property type="entry name" value="Undec_diphosphatase"/>
    <property type="match status" value="1"/>
</dbReference>
<dbReference type="InterPro" id="IPR003824">
    <property type="entry name" value="UppP"/>
</dbReference>
<dbReference type="NCBIfam" id="NF001391">
    <property type="entry name" value="PRK00281.1-5"/>
    <property type="match status" value="1"/>
</dbReference>
<dbReference type="PANTHER" id="PTHR30622">
    <property type="entry name" value="UNDECAPRENYL-DIPHOSPHATASE"/>
    <property type="match status" value="1"/>
</dbReference>
<dbReference type="PANTHER" id="PTHR30622:SF3">
    <property type="entry name" value="UNDECAPRENYL-DIPHOSPHATASE"/>
    <property type="match status" value="1"/>
</dbReference>
<dbReference type="Pfam" id="PF02673">
    <property type="entry name" value="BacA"/>
    <property type="match status" value="1"/>
</dbReference>
<gene>
    <name evidence="1" type="primary">uppP</name>
    <name type="synonym">bacA</name>
    <name type="ordered locus">M28_Spy0233</name>
</gene>
<comment type="function">
    <text evidence="1">Catalyzes the dephosphorylation of undecaprenyl diphosphate (UPP). Confers resistance to bacitracin.</text>
</comment>
<comment type="catalytic activity">
    <reaction evidence="1">
        <text>di-trans,octa-cis-undecaprenyl diphosphate + H2O = di-trans,octa-cis-undecaprenyl phosphate + phosphate + H(+)</text>
        <dbReference type="Rhea" id="RHEA:28094"/>
        <dbReference type="ChEBI" id="CHEBI:15377"/>
        <dbReference type="ChEBI" id="CHEBI:15378"/>
        <dbReference type="ChEBI" id="CHEBI:43474"/>
        <dbReference type="ChEBI" id="CHEBI:58405"/>
        <dbReference type="ChEBI" id="CHEBI:60392"/>
        <dbReference type="EC" id="3.6.1.27"/>
    </reaction>
</comment>
<comment type="subcellular location">
    <subcellularLocation>
        <location evidence="1">Cell membrane</location>
        <topology evidence="1">Multi-pass membrane protein</topology>
    </subcellularLocation>
</comment>
<comment type="miscellaneous">
    <text>Bacitracin is thought to be involved in the inhibition of peptidoglycan synthesis by sequestering undecaprenyl diphosphate, thereby reducing the pool of lipid carrier available.</text>
</comment>
<comment type="similarity">
    <text evidence="1">Belongs to the UppP family.</text>
</comment>
<sequence length="279" mass="31538">MLIIELLKAIFFGIIEGITEWLPVSSTGHLILVQEFIRLNQDKAFIEMFNIVIQLGAIIAVMLIYFERLNPFQPGKTAREVQLTWQLWLKVVIACIPSILIAVPLDNWFEAHFYFMVPIAIALIVYGIAFIWIEKRNAQQEPAVTELARMSYKTAFFIGCFQVLSIVPGTSRSGATILGAIILGTSRTVAADFTFFLAIPTMFGYSGLKAVKFFLDGHHLDFAQVLILLVASLTAFVVSLLAIRFLTDYVKKHDFTIFGKYRIVLGSLLLIYSFFKFVF</sequence>
<feature type="chain" id="PRO_0000227643" description="Undecaprenyl-diphosphatase">
    <location>
        <begin position="1"/>
        <end position="279"/>
    </location>
</feature>
<feature type="transmembrane region" description="Helical" evidence="1">
    <location>
        <begin position="2"/>
        <end position="22"/>
    </location>
</feature>
<feature type="transmembrane region" description="Helical" evidence="1">
    <location>
        <begin position="44"/>
        <end position="64"/>
    </location>
</feature>
<feature type="transmembrane region" description="Helical" evidence="1">
    <location>
        <begin position="85"/>
        <end position="105"/>
    </location>
</feature>
<feature type="transmembrane region" description="Helical" evidence="1">
    <location>
        <begin position="113"/>
        <end position="133"/>
    </location>
</feature>
<feature type="transmembrane region" description="Helical" evidence="1">
    <location>
        <begin position="163"/>
        <end position="183"/>
    </location>
</feature>
<feature type="transmembrane region" description="Helical" evidence="1">
    <location>
        <begin position="188"/>
        <end position="208"/>
    </location>
</feature>
<feature type="transmembrane region" description="Helical" evidence="1">
    <location>
        <begin position="223"/>
        <end position="243"/>
    </location>
</feature>
<feature type="transmembrane region" description="Helical" evidence="1">
    <location>
        <begin position="255"/>
        <end position="275"/>
    </location>
</feature>
<accession>Q48VA9</accession>
<organism>
    <name type="scientific">Streptococcus pyogenes serotype M28 (strain MGAS6180)</name>
    <dbReference type="NCBI Taxonomy" id="319701"/>
    <lineage>
        <taxon>Bacteria</taxon>
        <taxon>Bacillati</taxon>
        <taxon>Bacillota</taxon>
        <taxon>Bacilli</taxon>
        <taxon>Lactobacillales</taxon>
        <taxon>Streptococcaceae</taxon>
        <taxon>Streptococcus</taxon>
    </lineage>
</organism>
<proteinExistence type="inferred from homology"/>
<name>UPPP_STRPM</name>
<protein>
    <recommendedName>
        <fullName evidence="1">Undecaprenyl-diphosphatase</fullName>
        <ecNumber evidence="1">3.6.1.27</ecNumber>
    </recommendedName>
    <alternativeName>
        <fullName evidence="1">Bacitracin resistance protein</fullName>
    </alternativeName>
    <alternativeName>
        <fullName evidence="1">Undecaprenyl pyrophosphate phosphatase</fullName>
    </alternativeName>
</protein>
<reference key="1">
    <citation type="journal article" date="2005" name="J. Infect. Dis.">
        <title>Genome sequence of a serotype M28 strain of group A Streptococcus: potential new insights into puerperal sepsis and bacterial disease specificity.</title>
        <authorList>
            <person name="Green N.M."/>
            <person name="Zhang S."/>
            <person name="Porcella S.F."/>
            <person name="Nagiec M.J."/>
            <person name="Barbian K.D."/>
            <person name="Beres S.B."/>
            <person name="Lefebvre R.B."/>
            <person name="Musser J.M."/>
        </authorList>
    </citation>
    <scope>NUCLEOTIDE SEQUENCE [LARGE SCALE GENOMIC DNA]</scope>
    <source>
        <strain>MGAS6180</strain>
    </source>
</reference>
<keyword id="KW-0046">Antibiotic resistance</keyword>
<keyword id="KW-1003">Cell membrane</keyword>
<keyword id="KW-0133">Cell shape</keyword>
<keyword id="KW-0961">Cell wall biogenesis/degradation</keyword>
<keyword id="KW-0378">Hydrolase</keyword>
<keyword id="KW-0472">Membrane</keyword>
<keyword id="KW-0573">Peptidoglycan synthesis</keyword>
<keyword id="KW-0812">Transmembrane</keyword>
<keyword id="KW-1133">Transmembrane helix</keyword>
<evidence type="ECO:0000255" key="1">
    <source>
        <dbReference type="HAMAP-Rule" id="MF_01006"/>
    </source>
</evidence>